<accession>C5A0H2</accession>
<reference key="1">
    <citation type="journal article" date="2009" name="J. Bacteriol.">
        <title>Genomic sequencing reveals regulatory mutations and recombinational events in the widely used MC4100 lineage of Escherichia coli K-12.</title>
        <authorList>
            <person name="Ferenci T."/>
            <person name="Zhou Z."/>
            <person name="Betteridge T."/>
            <person name="Ren Y."/>
            <person name="Liu Y."/>
            <person name="Feng L."/>
            <person name="Reeves P.R."/>
            <person name="Wang L."/>
        </authorList>
    </citation>
    <scope>NUCLEOTIDE SEQUENCE [LARGE SCALE GENOMIC DNA]</scope>
    <source>
        <strain>K12 / MC4100 / BW2952</strain>
    </source>
</reference>
<comment type="function">
    <text evidence="2">Catalyzes the hydrolysis of N(4)-acetylcytidine (ac4C).</text>
</comment>
<comment type="catalytic activity">
    <reaction evidence="2">
        <text>N(4)-acetylcytidine + H2O = cytidine + acetate + H(+)</text>
        <dbReference type="Rhea" id="RHEA:62932"/>
        <dbReference type="ChEBI" id="CHEBI:15377"/>
        <dbReference type="ChEBI" id="CHEBI:15378"/>
        <dbReference type="ChEBI" id="CHEBI:17562"/>
        <dbReference type="ChEBI" id="CHEBI:30089"/>
        <dbReference type="ChEBI" id="CHEBI:70989"/>
        <dbReference type="EC" id="3.5.1.135"/>
    </reaction>
</comment>
<comment type="catalytic activity">
    <reaction evidence="2">
        <text>N(4)-acetyl-2'-deoxycytidine + H2O = 2'-deoxycytidine + acetate + H(+)</text>
        <dbReference type="Rhea" id="RHEA:62936"/>
        <dbReference type="ChEBI" id="CHEBI:15377"/>
        <dbReference type="ChEBI" id="CHEBI:15378"/>
        <dbReference type="ChEBI" id="CHEBI:15698"/>
        <dbReference type="ChEBI" id="CHEBI:30089"/>
        <dbReference type="ChEBI" id="CHEBI:146133"/>
        <dbReference type="EC" id="3.5.1.135"/>
    </reaction>
</comment>
<comment type="catalytic activity">
    <reaction evidence="2">
        <text>N(4)-acetylcytosine + H2O = cytosine + acetate + H(+)</text>
        <dbReference type="Rhea" id="RHEA:62940"/>
        <dbReference type="ChEBI" id="CHEBI:15377"/>
        <dbReference type="ChEBI" id="CHEBI:15378"/>
        <dbReference type="ChEBI" id="CHEBI:16040"/>
        <dbReference type="ChEBI" id="CHEBI:30089"/>
        <dbReference type="ChEBI" id="CHEBI:146134"/>
        <dbReference type="EC" id="3.5.1.135"/>
    </reaction>
</comment>
<comment type="similarity">
    <text evidence="2">Belongs to the N(4)-acetylcytidine amidohydrolase family.</text>
</comment>
<dbReference type="EC" id="3.5.1.135" evidence="2"/>
<dbReference type="EMBL" id="CP001396">
    <property type="protein sequence ID" value="ACR62372.1"/>
    <property type="molecule type" value="Genomic_DNA"/>
</dbReference>
<dbReference type="RefSeq" id="WP_001182957.1">
    <property type="nucleotide sequence ID" value="NC_012759.1"/>
</dbReference>
<dbReference type="SMR" id="C5A0H2"/>
<dbReference type="GeneID" id="75173001"/>
<dbReference type="KEGG" id="ebw:BWG_2625"/>
<dbReference type="HOGENOM" id="CLU_152586_0_0_6"/>
<dbReference type="GO" id="GO:0005829">
    <property type="term" value="C:cytosol"/>
    <property type="evidence" value="ECO:0007669"/>
    <property type="project" value="TreeGrafter"/>
</dbReference>
<dbReference type="GO" id="GO:0016813">
    <property type="term" value="F:hydrolase activity, acting on carbon-nitrogen (but not peptide) bonds, in linear amidines"/>
    <property type="evidence" value="ECO:0007669"/>
    <property type="project" value="UniProtKB-UniRule"/>
</dbReference>
<dbReference type="GO" id="GO:0106251">
    <property type="term" value="F:N4-acetylcytidine amidohydrolase activity"/>
    <property type="evidence" value="ECO:0007669"/>
    <property type="project" value="RHEA"/>
</dbReference>
<dbReference type="CDD" id="cd06552">
    <property type="entry name" value="ASCH_yqfb_like"/>
    <property type="match status" value="1"/>
</dbReference>
<dbReference type="FunFam" id="2.30.130.30:FF:000001">
    <property type="entry name" value="UPF0267 protein YqfB"/>
    <property type="match status" value="1"/>
</dbReference>
<dbReference type="Gene3D" id="2.30.130.30">
    <property type="entry name" value="Hypothetical protein"/>
    <property type="match status" value="1"/>
</dbReference>
<dbReference type="HAMAP" id="MF_00684">
    <property type="entry name" value="ac4C_amidohydr"/>
    <property type="match status" value="1"/>
</dbReference>
<dbReference type="InterPro" id="IPR008314">
    <property type="entry name" value="AC4CH"/>
</dbReference>
<dbReference type="InterPro" id="IPR007374">
    <property type="entry name" value="ASCH_domain"/>
</dbReference>
<dbReference type="InterPro" id="IPR015947">
    <property type="entry name" value="PUA-like_sf"/>
</dbReference>
<dbReference type="NCBIfam" id="NF003443">
    <property type="entry name" value="PRK04980.1"/>
    <property type="match status" value="1"/>
</dbReference>
<dbReference type="PANTHER" id="PTHR38088">
    <property type="entry name" value="UCP029143 FAMILY PROTEIN"/>
    <property type="match status" value="1"/>
</dbReference>
<dbReference type="PANTHER" id="PTHR38088:SF2">
    <property type="entry name" value="UCP029143 FAMILY PROTEIN"/>
    <property type="match status" value="1"/>
</dbReference>
<dbReference type="Pfam" id="PF04266">
    <property type="entry name" value="ASCH"/>
    <property type="match status" value="1"/>
</dbReference>
<dbReference type="PIRSF" id="PIRSF029143">
    <property type="entry name" value="UCP029143"/>
    <property type="match status" value="1"/>
</dbReference>
<dbReference type="SMART" id="SM01022">
    <property type="entry name" value="ASCH"/>
    <property type="match status" value="1"/>
</dbReference>
<dbReference type="SUPFAM" id="SSF88697">
    <property type="entry name" value="PUA domain-like"/>
    <property type="match status" value="1"/>
</dbReference>
<proteinExistence type="inferred from homology"/>
<organism>
    <name type="scientific">Escherichia coli (strain K12 / MC4100 / BW2952)</name>
    <dbReference type="NCBI Taxonomy" id="595496"/>
    <lineage>
        <taxon>Bacteria</taxon>
        <taxon>Pseudomonadati</taxon>
        <taxon>Pseudomonadota</taxon>
        <taxon>Gammaproteobacteria</taxon>
        <taxon>Enterobacterales</taxon>
        <taxon>Enterobacteriaceae</taxon>
        <taxon>Escherichia</taxon>
    </lineage>
</organism>
<keyword id="KW-0378">Hydrolase</keyword>
<protein>
    <recommendedName>
        <fullName evidence="2">N(4)-acetylcytidine amidohydrolase</fullName>
        <shortName evidence="2">ac4C amidohydrolase</shortName>
        <ecNumber evidence="2">3.5.1.135</ecNumber>
    </recommendedName>
</protein>
<evidence type="ECO:0000255" key="1"/>
<evidence type="ECO:0000255" key="2">
    <source>
        <dbReference type="HAMAP-Rule" id="MF_00684"/>
    </source>
</evidence>
<sequence>MQPNDITFFQRFQDDILAGRKTITIRDESESHFKTGDVLRVGRFEDDGYFCTIEVTATSTVTLDTLTEKHAEQENMTLTELKKVIADIYPGQTQFYVIEFKCL</sequence>
<gene>
    <name type="primary">yqfB</name>
    <name type="ordered locus">BWG_2625</name>
</gene>
<feature type="chain" id="PRO_1000212548" description="N(4)-acetylcytidine amidohydrolase">
    <location>
        <begin position="1"/>
        <end position="103"/>
    </location>
</feature>
<feature type="domain" description="ASCH" evidence="1">
    <location>
        <begin position="6"/>
        <end position="101"/>
    </location>
</feature>
<feature type="active site" description="Proton acceptor" evidence="2">
    <location>
        <position position="21"/>
    </location>
</feature>
<feature type="active site" description="Nucleophile" evidence="2">
    <location>
        <position position="24"/>
    </location>
</feature>
<feature type="active site" description="Proton donor" evidence="2">
    <location>
        <position position="74"/>
    </location>
</feature>
<name>AC4CH_ECOBW</name>